<protein>
    <recommendedName>
        <fullName>Ras-related protein Rab-3C</fullName>
        <ecNumber evidence="2">3.6.5.2</ecNumber>
    </recommendedName>
</protein>
<organism>
    <name type="scientific">Mus musculus</name>
    <name type="common">Mouse</name>
    <dbReference type="NCBI Taxonomy" id="10090"/>
    <lineage>
        <taxon>Eukaryota</taxon>
        <taxon>Metazoa</taxon>
        <taxon>Chordata</taxon>
        <taxon>Craniata</taxon>
        <taxon>Vertebrata</taxon>
        <taxon>Euteleostomi</taxon>
        <taxon>Mammalia</taxon>
        <taxon>Eutheria</taxon>
        <taxon>Euarchontoglires</taxon>
        <taxon>Glires</taxon>
        <taxon>Rodentia</taxon>
        <taxon>Myomorpha</taxon>
        <taxon>Muroidea</taxon>
        <taxon>Muridae</taxon>
        <taxon>Murinae</taxon>
        <taxon>Mus</taxon>
        <taxon>Mus</taxon>
    </lineage>
</organism>
<keyword id="KW-1003">Cell membrane</keyword>
<keyword id="KW-0903">Direct protein sequencing</keyword>
<keyword id="KW-0342">GTP-binding</keyword>
<keyword id="KW-0378">Hydrolase</keyword>
<keyword id="KW-0449">Lipoprotein</keyword>
<keyword id="KW-0460">Magnesium</keyword>
<keyword id="KW-0472">Membrane</keyword>
<keyword id="KW-0479">Metal-binding</keyword>
<keyword id="KW-0488">Methylation</keyword>
<keyword id="KW-0547">Nucleotide-binding</keyword>
<keyword id="KW-0597">Phosphoprotein</keyword>
<keyword id="KW-0636">Prenylation</keyword>
<keyword id="KW-0653">Protein transport</keyword>
<keyword id="KW-1185">Reference proteome</keyword>
<keyword id="KW-0813">Transport</keyword>
<sequence length="227" mass="25872">MRHEAPMQMASAQDARFGQKDSSDQNFDYMFKLLIIGNSSVGKTSFLFRYADDSFTSAFVSTVGIDFKVKTVFKNEKRIKLQIWDTAGQERYRTITTAYYRGAMGFILMYDITNEESFNAVQDWSTQIKTYSWDNAQVILAGNKCDMEDERVVSTERGQRLGEQLGFEFFETSAKDNINVKQTFERLVDIICDKMSESLETDPAITAAKQSTRLKETPPPPQPNCGC</sequence>
<comment type="function">
    <text evidence="2">The small GTPases Rab are key regulators of intracellular membrane trafficking, from the formation of transport vesicles to their fusion with membranes. Rabs cycle between an inactive GDP-bound form and an active GTP-bound form that is able to recruit to membranes different sets of downstream effectors directly responsible for vesicle formation, movement, tethering and fusion.</text>
</comment>
<comment type="catalytic activity">
    <reaction evidence="2">
        <text>GTP + H2O = GDP + phosphate + H(+)</text>
        <dbReference type="Rhea" id="RHEA:19669"/>
        <dbReference type="ChEBI" id="CHEBI:15377"/>
        <dbReference type="ChEBI" id="CHEBI:15378"/>
        <dbReference type="ChEBI" id="CHEBI:37565"/>
        <dbReference type="ChEBI" id="CHEBI:43474"/>
        <dbReference type="ChEBI" id="CHEBI:58189"/>
        <dbReference type="EC" id="3.6.5.2"/>
    </reaction>
    <physiologicalReaction direction="left-to-right" evidence="2">
        <dbReference type="Rhea" id="RHEA:19670"/>
    </physiologicalReaction>
</comment>
<comment type="cofactor">
    <cofactor evidence="2">
        <name>Mg(2+)</name>
        <dbReference type="ChEBI" id="CHEBI:18420"/>
    </cofactor>
</comment>
<comment type="activity regulation">
    <text evidence="3">Regulated by guanine nucleotide exchange factors (GEFs) which promote the exchange of bound GDP for free GTP. Regulated by GTPase activating proteins (GAPs) which increase the GTP hydrolysis activity. Inhibited by GDP dissociation inhibitors (GDIs) which prevent Rab-GDP dissociation.</text>
</comment>
<comment type="subunit">
    <text evidence="6 8 9">Interacts with RIMS1, RIMS2, RPH3A and RPH3AL (PubMed:12578829). Interacts with GDI2, CHM and CHML; phosphorylation at Thr-86 disrupts these interactions (By similarity). Interacts with MADD (via uDENN domain); the GTP-bound form is preferred for interaction (PubMed:18849981).</text>
</comment>
<comment type="subcellular location">
    <subcellularLocation>
        <location evidence="11">Cell membrane</location>
        <topology evidence="11">Lipid-anchor</topology>
        <orientation evidence="11">Cytoplasmic side</orientation>
    </subcellularLocation>
</comment>
<comment type="domain">
    <text evidence="2">Switch 1, switch 2 and the interswitch regions are characteristic of Rab GTPases and mediate the interactions with Rab downstream effectors. The switch regions undergo conformational changes upon nucleotide binding which drives interaction with specific sets of effector proteins, with most effectors only binding to GTP-bound Rab.</text>
</comment>
<comment type="PTM">
    <text evidence="6">Phosphorylation of Thr-86 in the switch II region by LRRK2 prevents the association of RAB regulatory proteins, including CHM, CHML and RAB GDP dissociation inhibitor GDI2.</text>
</comment>
<comment type="similarity">
    <text evidence="11">Belongs to the small GTPase superfamily. Rab family.</text>
</comment>
<reference key="1">
    <citation type="submission" date="2001-02" db="EMBL/GenBank/DDBJ databases">
        <authorList>
            <person name="Wang X."/>
            <person name="Hu B."/>
            <person name="Kilimann M.W."/>
        </authorList>
    </citation>
    <scope>NUCLEOTIDE SEQUENCE [MRNA]</scope>
    <source>
        <tissue>Brain</tissue>
    </source>
</reference>
<reference key="2">
    <citation type="submission" date="2000-10" db="EMBL/GenBank/DDBJ databases">
        <authorList>
            <person name="Schluter O.M."/>
            <person name="Benseler F."/>
            <person name="Suedhof T.C."/>
        </authorList>
    </citation>
    <scope>NUCLEOTIDE SEQUENCE [MRNA]</scope>
    <source>
        <tissue>Brain</tissue>
    </source>
</reference>
<reference key="3">
    <citation type="submission" date="2001-02" db="EMBL/GenBank/DDBJ databases">
        <title>Molecular cloning and tissue expression of the mouse homolog of Rab3C.</title>
        <authorList>
            <person name="Pavlos N.J."/>
            <person name="Xu J."/>
            <person name="Zheng M.H."/>
        </authorList>
    </citation>
    <scope>NUCLEOTIDE SEQUENCE [MRNA]</scope>
    <source>
        <strain>C57BL/6J</strain>
        <tissue>Embryo</tissue>
    </source>
</reference>
<reference key="4">
    <citation type="journal article" date="2005" name="Science">
        <title>The transcriptional landscape of the mammalian genome.</title>
        <authorList>
            <person name="Carninci P."/>
            <person name="Kasukawa T."/>
            <person name="Katayama S."/>
            <person name="Gough J."/>
            <person name="Frith M.C."/>
            <person name="Maeda N."/>
            <person name="Oyama R."/>
            <person name="Ravasi T."/>
            <person name="Lenhard B."/>
            <person name="Wells C."/>
            <person name="Kodzius R."/>
            <person name="Shimokawa K."/>
            <person name="Bajic V.B."/>
            <person name="Brenner S.E."/>
            <person name="Batalov S."/>
            <person name="Forrest A.R."/>
            <person name="Zavolan M."/>
            <person name="Davis M.J."/>
            <person name="Wilming L.G."/>
            <person name="Aidinis V."/>
            <person name="Allen J.E."/>
            <person name="Ambesi-Impiombato A."/>
            <person name="Apweiler R."/>
            <person name="Aturaliya R.N."/>
            <person name="Bailey T.L."/>
            <person name="Bansal M."/>
            <person name="Baxter L."/>
            <person name="Beisel K.W."/>
            <person name="Bersano T."/>
            <person name="Bono H."/>
            <person name="Chalk A.M."/>
            <person name="Chiu K.P."/>
            <person name="Choudhary V."/>
            <person name="Christoffels A."/>
            <person name="Clutterbuck D.R."/>
            <person name="Crowe M.L."/>
            <person name="Dalla E."/>
            <person name="Dalrymple B.P."/>
            <person name="de Bono B."/>
            <person name="Della Gatta G."/>
            <person name="di Bernardo D."/>
            <person name="Down T."/>
            <person name="Engstrom P."/>
            <person name="Fagiolini M."/>
            <person name="Faulkner G."/>
            <person name="Fletcher C.F."/>
            <person name="Fukushima T."/>
            <person name="Furuno M."/>
            <person name="Futaki S."/>
            <person name="Gariboldi M."/>
            <person name="Georgii-Hemming P."/>
            <person name="Gingeras T.R."/>
            <person name="Gojobori T."/>
            <person name="Green R.E."/>
            <person name="Gustincich S."/>
            <person name="Harbers M."/>
            <person name="Hayashi Y."/>
            <person name="Hensch T.K."/>
            <person name="Hirokawa N."/>
            <person name="Hill D."/>
            <person name="Huminiecki L."/>
            <person name="Iacono M."/>
            <person name="Ikeo K."/>
            <person name="Iwama A."/>
            <person name="Ishikawa T."/>
            <person name="Jakt M."/>
            <person name="Kanapin A."/>
            <person name="Katoh M."/>
            <person name="Kawasawa Y."/>
            <person name="Kelso J."/>
            <person name="Kitamura H."/>
            <person name="Kitano H."/>
            <person name="Kollias G."/>
            <person name="Krishnan S.P."/>
            <person name="Kruger A."/>
            <person name="Kummerfeld S.K."/>
            <person name="Kurochkin I.V."/>
            <person name="Lareau L.F."/>
            <person name="Lazarevic D."/>
            <person name="Lipovich L."/>
            <person name="Liu J."/>
            <person name="Liuni S."/>
            <person name="McWilliam S."/>
            <person name="Madan Babu M."/>
            <person name="Madera M."/>
            <person name="Marchionni L."/>
            <person name="Matsuda H."/>
            <person name="Matsuzawa S."/>
            <person name="Miki H."/>
            <person name="Mignone F."/>
            <person name="Miyake S."/>
            <person name="Morris K."/>
            <person name="Mottagui-Tabar S."/>
            <person name="Mulder N."/>
            <person name="Nakano N."/>
            <person name="Nakauchi H."/>
            <person name="Ng P."/>
            <person name="Nilsson R."/>
            <person name="Nishiguchi S."/>
            <person name="Nishikawa S."/>
            <person name="Nori F."/>
            <person name="Ohara O."/>
            <person name="Okazaki Y."/>
            <person name="Orlando V."/>
            <person name="Pang K.C."/>
            <person name="Pavan W.J."/>
            <person name="Pavesi G."/>
            <person name="Pesole G."/>
            <person name="Petrovsky N."/>
            <person name="Piazza S."/>
            <person name="Reed J."/>
            <person name="Reid J.F."/>
            <person name="Ring B.Z."/>
            <person name="Ringwald M."/>
            <person name="Rost B."/>
            <person name="Ruan Y."/>
            <person name="Salzberg S.L."/>
            <person name="Sandelin A."/>
            <person name="Schneider C."/>
            <person name="Schoenbach C."/>
            <person name="Sekiguchi K."/>
            <person name="Semple C.A."/>
            <person name="Seno S."/>
            <person name="Sessa L."/>
            <person name="Sheng Y."/>
            <person name="Shibata Y."/>
            <person name="Shimada H."/>
            <person name="Shimada K."/>
            <person name="Silva D."/>
            <person name="Sinclair B."/>
            <person name="Sperling S."/>
            <person name="Stupka E."/>
            <person name="Sugiura K."/>
            <person name="Sultana R."/>
            <person name="Takenaka Y."/>
            <person name="Taki K."/>
            <person name="Tammoja K."/>
            <person name="Tan S.L."/>
            <person name="Tang S."/>
            <person name="Taylor M.S."/>
            <person name="Tegner J."/>
            <person name="Teichmann S.A."/>
            <person name="Ueda H.R."/>
            <person name="van Nimwegen E."/>
            <person name="Verardo R."/>
            <person name="Wei C.L."/>
            <person name="Yagi K."/>
            <person name="Yamanishi H."/>
            <person name="Zabarovsky E."/>
            <person name="Zhu S."/>
            <person name="Zimmer A."/>
            <person name="Hide W."/>
            <person name="Bult C."/>
            <person name="Grimmond S.M."/>
            <person name="Teasdale R.D."/>
            <person name="Liu E.T."/>
            <person name="Brusic V."/>
            <person name="Quackenbush J."/>
            <person name="Wahlestedt C."/>
            <person name="Mattick J.S."/>
            <person name="Hume D.A."/>
            <person name="Kai C."/>
            <person name="Sasaki D."/>
            <person name="Tomaru Y."/>
            <person name="Fukuda S."/>
            <person name="Kanamori-Katayama M."/>
            <person name="Suzuki M."/>
            <person name="Aoki J."/>
            <person name="Arakawa T."/>
            <person name="Iida J."/>
            <person name="Imamura K."/>
            <person name="Itoh M."/>
            <person name="Kato T."/>
            <person name="Kawaji H."/>
            <person name="Kawagashira N."/>
            <person name="Kawashima T."/>
            <person name="Kojima M."/>
            <person name="Kondo S."/>
            <person name="Konno H."/>
            <person name="Nakano K."/>
            <person name="Ninomiya N."/>
            <person name="Nishio T."/>
            <person name="Okada M."/>
            <person name="Plessy C."/>
            <person name="Shibata K."/>
            <person name="Shiraki T."/>
            <person name="Suzuki S."/>
            <person name="Tagami M."/>
            <person name="Waki K."/>
            <person name="Watahiki A."/>
            <person name="Okamura-Oho Y."/>
            <person name="Suzuki H."/>
            <person name="Kawai J."/>
            <person name="Hayashizaki Y."/>
        </authorList>
    </citation>
    <scope>NUCLEOTIDE SEQUENCE [LARGE SCALE MRNA]</scope>
    <source>
        <strain>C57BL/6J</strain>
        <tissue>Embryonic head</tissue>
    </source>
</reference>
<reference key="5">
    <citation type="submission" date="2007-04" db="UniProtKB">
        <authorList>
            <person name="Lubec G."/>
            <person name="Kang S.U."/>
        </authorList>
    </citation>
    <scope>PROTEIN SEQUENCE OF 1-16; 21-43; 50-68; 81-91; 161-175 AND 187-209</scope>
    <scope>IDENTIFICATION BY MASS SPECTROMETRY</scope>
    <source>
        <strain>C57BL/6J</strain>
        <tissue>Brain</tissue>
    </source>
</reference>
<reference key="6">
    <citation type="journal article" date="2003" name="J. Biol. Chem.">
        <title>Distinct Rab binding specificity of Rim1, Rim2, rabphilin, and Noc2. Identification of a critical determinant of Rab3A/Rab27A recognition by Rim2.</title>
        <authorList>
            <person name="Fukuda M."/>
        </authorList>
    </citation>
    <scope>INTERACTION WITH RIMS1; RIMS2; RPH3A AND RPH3AL</scope>
</reference>
<reference key="7">
    <citation type="journal article" date="2008" name="Nat. Cell Biol.">
        <title>KIF1Bbeta- and KIF1A-mediated axonal transport of presynaptic regulator Rab3 occurs in a GTP-dependent manner through DENN/MADD.</title>
        <authorList>
            <person name="Niwa S."/>
            <person name="Tanaka Y."/>
            <person name="Hirokawa N."/>
        </authorList>
    </citation>
    <scope>INTERACTION WITH MADD</scope>
</reference>
<reference key="8">
    <citation type="journal article" date="2010" name="Cell">
        <title>A tissue-specific atlas of mouse protein phosphorylation and expression.</title>
        <authorList>
            <person name="Huttlin E.L."/>
            <person name="Jedrychowski M.P."/>
            <person name="Elias J.E."/>
            <person name="Goswami T."/>
            <person name="Rad R."/>
            <person name="Beausoleil S.A."/>
            <person name="Villen J."/>
            <person name="Haas W."/>
            <person name="Sowa M.E."/>
            <person name="Gygi S.P."/>
        </authorList>
    </citation>
    <scope>PHOSPHORYLATION [LARGE SCALE ANALYSIS] AT THR-206</scope>
    <scope>IDENTIFICATION BY MASS SPECTROMETRY [LARGE SCALE ANALYSIS]</scope>
    <source>
        <tissue>Brain</tissue>
    </source>
</reference>
<reference key="9">
    <citation type="journal article" date="2017" name="Elife">
        <title>Systematic proteomic analysis of LRRK2-mediated Rab GTPase phosphorylation establishes a connection to ciliogenesis.</title>
        <authorList>
            <person name="Steger M."/>
            <person name="Diez F."/>
            <person name="Dhekne H.S."/>
            <person name="Lis P."/>
            <person name="Nirujogi R.S."/>
            <person name="Karayel O."/>
            <person name="Tonelli F."/>
            <person name="Martinez T.N."/>
            <person name="Lorentzen E."/>
            <person name="Pfeffer S.R."/>
            <person name="Alessi D.R."/>
            <person name="Mann M."/>
        </authorList>
    </citation>
    <scope>PHOSPHORYLATION AT THR-86</scope>
</reference>
<proteinExistence type="evidence at protein level"/>
<gene>
    <name evidence="12" type="primary">Rab3c</name>
</gene>
<evidence type="ECO:0000250" key="1"/>
<evidence type="ECO:0000250" key="2">
    <source>
        <dbReference type="UniProtKB" id="P10949"/>
    </source>
</evidence>
<evidence type="ECO:0000250" key="3">
    <source>
        <dbReference type="UniProtKB" id="P20336"/>
    </source>
</evidence>
<evidence type="ECO:0000250" key="4">
    <source>
        <dbReference type="UniProtKB" id="P20337"/>
    </source>
</evidence>
<evidence type="ECO:0000250" key="5">
    <source>
        <dbReference type="UniProtKB" id="Q63941"/>
    </source>
</evidence>
<evidence type="ECO:0000250" key="6">
    <source>
        <dbReference type="UniProtKB" id="Q96E17"/>
    </source>
</evidence>
<evidence type="ECO:0000256" key="7">
    <source>
        <dbReference type="SAM" id="MobiDB-lite"/>
    </source>
</evidence>
<evidence type="ECO:0000269" key="8">
    <source>
    </source>
</evidence>
<evidence type="ECO:0000269" key="9">
    <source>
    </source>
</evidence>
<evidence type="ECO:0000269" key="10">
    <source>
    </source>
</evidence>
<evidence type="ECO:0000305" key="11"/>
<evidence type="ECO:0000312" key="12">
    <source>
        <dbReference type="MGI" id="MGI:1914545"/>
    </source>
</evidence>
<evidence type="ECO:0007744" key="13">
    <source>
    </source>
</evidence>
<dbReference type="EC" id="3.6.5.2" evidence="2"/>
<dbReference type="EMBL" id="AJ310532">
    <property type="protein sequence ID" value="CAC32042.1"/>
    <property type="molecule type" value="mRNA"/>
</dbReference>
<dbReference type="EMBL" id="AF312037">
    <property type="protein sequence ID" value="AAG60047.1"/>
    <property type="molecule type" value="mRNA"/>
</dbReference>
<dbReference type="EMBL" id="AY026947">
    <property type="protein sequence ID" value="AAK08980.1"/>
    <property type="molecule type" value="mRNA"/>
</dbReference>
<dbReference type="EMBL" id="AK014132">
    <property type="protein sequence ID" value="BAB29172.1"/>
    <property type="molecule type" value="mRNA"/>
</dbReference>
<dbReference type="CCDS" id="CCDS26764.1"/>
<dbReference type="RefSeq" id="NP_076341.1">
    <property type="nucleotide sequence ID" value="NM_023852.5"/>
</dbReference>
<dbReference type="SMR" id="P62823"/>
<dbReference type="BioGRID" id="212082">
    <property type="interactions" value="10"/>
</dbReference>
<dbReference type="FunCoup" id="P62823">
    <property type="interactions" value="1001"/>
</dbReference>
<dbReference type="IntAct" id="P62823">
    <property type="interactions" value="16"/>
</dbReference>
<dbReference type="STRING" id="10090.ENSMUSP00000132945"/>
<dbReference type="GlyGen" id="P62823">
    <property type="glycosylation" value="1 site, 1 O-linked glycan (1 site)"/>
</dbReference>
<dbReference type="iPTMnet" id="P62823"/>
<dbReference type="MetOSite" id="P62823"/>
<dbReference type="PhosphoSitePlus" id="P62823"/>
<dbReference type="SwissPalm" id="P62823"/>
<dbReference type="jPOST" id="P62823"/>
<dbReference type="PaxDb" id="10090-ENSMUSP00000132945"/>
<dbReference type="PeptideAtlas" id="P62823"/>
<dbReference type="ProteomicsDB" id="253147"/>
<dbReference type="Pumba" id="P62823"/>
<dbReference type="Antibodypedia" id="23602">
    <property type="antibodies" value="128 antibodies from 26 providers"/>
</dbReference>
<dbReference type="DNASU" id="67295"/>
<dbReference type="Ensembl" id="ENSMUST00000167824.3">
    <property type="protein sequence ID" value="ENSMUSP00000132945.2"/>
    <property type="gene ID" value="ENSMUSG00000021700.11"/>
</dbReference>
<dbReference type="GeneID" id="67295"/>
<dbReference type="KEGG" id="mmu:67295"/>
<dbReference type="UCSC" id="uc007rvo.3">
    <property type="organism name" value="mouse"/>
</dbReference>
<dbReference type="AGR" id="MGI:1914545"/>
<dbReference type="CTD" id="115827"/>
<dbReference type="MGI" id="MGI:1914545">
    <property type="gene designation" value="Rab3c"/>
</dbReference>
<dbReference type="VEuPathDB" id="HostDB:ENSMUSG00000021700"/>
<dbReference type="eggNOG" id="KOG0093">
    <property type="taxonomic scope" value="Eukaryota"/>
</dbReference>
<dbReference type="GeneTree" id="ENSGT00940000157368"/>
<dbReference type="HOGENOM" id="CLU_041217_10_1_1"/>
<dbReference type="InParanoid" id="P62823"/>
<dbReference type="OMA" id="FDMEDER"/>
<dbReference type="OrthoDB" id="9989112at2759"/>
<dbReference type="PhylomeDB" id="P62823"/>
<dbReference type="TreeFam" id="TF313199"/>
<dbReference type="Reactome" id="R-MMU-8873719">
    <property type="pathway name" value="RAB geranylgeranylation"/>
</dbReference>
<dbReference type="BioGRID-ORCS" id="67295">
    <property type="hits" value="1 hit in 78 CRISPR screens"/>
</dbReference>
<dbReference type="CD-CODE" id="CE726F99">
    <property type="entry name" value="Postsynaptic density"/>
</dbReference>
<dbReference type="ChiTaRS" id="Rab3c">
    <property type="organism name" value="mouse"/>
</dbReference>
<dbReference type="PRO" id="PR:P62823"/>
<dbReference type="Proteomes" id="UP000000589">
    <property type="component" value="Chromosome 13"/>
</dbReference>
<dbReference type="RNAct" id="P62823">
    <property type="molecule type" value="protein"/>
</dbReference>
<dbReference type="Bgee" id="ENSMUSG00000021700">
    <property type="expression patterns" value="Expressed in medial dorsal nucleus of thalamus and 124 other cell types or tissues"/>
</dbReference>
<dbReference type="ExpressionAtlas" id="P62823">
    <property type="expression patterns" value="baseline and differential"/>
</dbReference>
<dbReference type="GO" id="GO:0048471">
    <property type="term" value="C:perinuclear region of cytoplasm"/>
    <property type="evidence" value="ECO:0007669"/>
    <property type="project" value="Ensembl"/>
</dbReference>
<dbReference type="GO" id="GO:0005886">
    <property type="term" value="C:plasma membrane"/>
    <property type="evidence" value="ECO:0007669"/>
    <property type="project" value="UniProtKB-SubCell"/>
</dbReference>
<dbReference type="GO" id="GO:0008021">
    <property type="term" value="C:synaptic vesicle"/>
    <property type="evidence" value="ECO:0000314"/>
    <property type="project" value="MGI"/>
</dbReference>
<dbReference type="GO" id="GO:0005525">
    <property type="term" value="F:GTP binding"/>
    <property type="evidence" value="ECO:0007669"/>
    <property type="project" value="UniProtKB-KW"/>
</dbReference>
<dbReference type="GO" id="GO:0030742">
    <property type="term" value="F:GTP-dependent protein binding"/>
    <property type="evidence" value="ECO:0000353"/>
    <property type="project" value="MGI"/>
</dbReference>
<dbReference type="GO" id="GO:0003924">
    <property type="term" value="F:GTPase activity"/>
    <property type="evidence" value="ECO:0007669"/>
    <property type="project" value="Ensembl"/>
</dbReference>
<dbReference type="GO" id="GO:0031489">
    <property type="term" value="F:myosin V binding"/>
    <property type="evidence" value="ECO:0007669"/>
    <property type="project" value="Ensembl"/>
</dbReference>
<dbReference type="GO" id="GO:0019882">
    <property type="term" value="P:antigen processing and presentation"/>
    <property type="evidence" value="ECO:0007669"/>
    <property type="project" value="Ensembl"/>
</dbReference>
<dbReference type="GO" id="GO:0015031">
    <property type="term" value="P:protein transport"/>
    <property type="evidence" value="ECO:0007669"/>
    <property type="project" value="UniProtKB-KW"/>
</dbReference>
<dbReference type="GO" id="GO:0017157">
    <property type="term" value="P:regulation of exocytosis"/>
    <property type="evidence" value="ECO:0000314"/>
    <property type="project" value="MGI"/>
</dbReference>
<dbReference type="CDD" id="cd01865">
    <property type="entry name" value="Rab3"/>
    <property type="match status" value="1"/>
</dbReference>
<dbReference type="FunFam" id="3.40.50.300:FF:000206">
    <property type="entry name" value="Ras-related protein Rab-3C"/>
    <property type="match status" value="1"/>
</dbReference>
<dbReference type="Gene3D" id="3.40.50.300">
    <property type="entry name" value="P-loop containing nucleotide triphosphate hydrolases"/>
    <property type="match status" value="1"/>
</dbReference>
<dbReference type="InterPro" id="IPR027417">
    <property type="entry name" value="P-loop_NTPase"/>
</dbReference>
<dbReference type="InterPro" id="IPR037872">
    <property type="entry name" value="Rab3"/>
</dbReference>
<dbReference type="InterPro" id="IPR005225">
    <property type="entry name" value="Small_GTP-bd"/>
</dbReference>
<dbReference type="InterPro" id="IPR001806">
    <property type="entry name" value="Small_GTPase"/>
</dbReference>
<dbReference type="InterPro" id="IPR050305">
    <property type="entry name" value="Small_GTPase_Rab"/>
</dbReference>
<dbReference type="NCBIfam" id="TIGR00231">
    <property type="entry name" value="small_GTP"/>
    <property type="match status" value="1"/>
</dbReference>
<dbReference type="PANTHER" id="PTHR47980">
    <property type="entry name" value="LD44762P"/>
    <property type="match status" value="1"/>
</dbReference>
<dbReference type="Pfam" id="PF00071">
    <property type="entry name" value="Ras"/>
    <property type="match status" value="1"/>
</dbReference>
<dbReference type="PRINTS" id="PR00449">
    <property type="entry name" value="RASTRNSFRMNG"/>
</dbReference>
<dbReference type="SMART" id="SM00175">
    <property type="entry name" value="RAB"/>
    <property type="match status" value="1"/>
</dbReference>
<dbReference type="SMART" id="SM00176">
    <property type="entry name" value="RAN"/>
    <property type="match status" value="1"/>
</dbReference>
<dbReference type="SMART" id="SM00173">
    <property type="entry name" value="RAS"/>
    <property type="match status" value="1"/>
</dbReference>
<dbReference type="SMART" id="SM00174">
    <property type="entry name" value="RHO"/>
    <property type="match status" value="1"/>
</dbReference>
<dbReference type="SUPFAM" id="SSF52540">
    <property type="entry name" value="P-loop containing nucleoside triphosphate hydrolases"/>
    <property type="match status" value="1"/>
</dbReference>
<dbReference type="PROSITE" id="PS51419">
    <property type="entry name" value="RAB"/>
    <property type="match status" value="1"/>
</dbReference>
<accession>P62823</accession>
<accession>Q62858</accession>
<accession>Q62974</accession>
<accession>Q63482</accession>
<accession>Q9CXQ1</accession>
<name>RAB3C_MOUSE</name>
<feature type="chain" id="PRO_0000121086" description="Ras-related protein Rab-3C">
    <location>
        <begin position="1"/>
        <end position="227"/>
    </location>
</feature>
<feature type="region of interest" description="Disordered" evidence="7">
    <location>
        <begin position="202"/>
        <end position="227"/>
    </location>
</feature>
<feature type="short sequence motif" description="Switch 1" evidence="2">
    <location>
        <begin position="53"/>
        <end position="66"/>
    </location>
</feature>
<feature type="short sequence motif" description="Switch 2" evidence="2">
    <location>
        <begin position="86"/>
        <end position="104"/>
    </location>
</feature>
<feature type="compositionally biased region" description="Pro residues" evidence="7">
    <location>
        <begin position="217"/>
        <end position="227"/>
    </location>
</feature>
<feature type="binding site" evidence="2">
    <location>
        <position position="39"/>
    </location>
    <ligand>
        <name>GTP</name>
        <dbReference type="ChEBI" id="CHEBI:37565"/>
    </ligand>
</feature>
<feature type="binding site" evidence="2">
    <location>
        <position position="42"/>
    </location>
    <ligand>
        <name>GTP</name>
        <dbReference type="ChEBI" id="CHEBI:37565"/>
    </ligand>
</feature>
<feature type="binding site" evidence="2">
    <location>
        <position position="43"/>
    </location>
    <ligand>
        <name>GTP</name>
        <dbReference type="ChEBI" id="CHEBI:37565"/>
    </ligand>
</feature>
<feature type="binding site" evidence="2">
    <location>
        <position position="44"/>
    </location>
    <ligand>
        <name>GTP</name>
        <dbReference type="ChEBI" id="CHEBI:37565"/>
    </ligand>
</feature>
<feature type="binding site" evidence="2">
    <location>
        <position position="44"/>
    </location>
    <ligand>
        <name>Mg(2+)</name>
        <dbReference type="ChEBI" id="CHEBI:18420"/>
    </ligand>
</feature>
<feature type="binding site" evidence="2">
    <location>
        <position position="45"/>
    </location>
    <ligand>
        <name>GTP</name>
        <dbReference type="ChEBI" id="CHEBI:37565"/>
    </ligand>
</feature>
<feature type="binding site" evidence="2">
    <location>
        <position position="56"/>
    </location>
    <ligand>
        <name>GTP</name>
        <dbReference type="ChEBI" id="CHEBI:37565"/>
    </ligand>
</feature>
<feature type="binding site" evidence="2">
    <location>
        <position position="57"/>
    </location>
    <ligand>
        <name>GTP</name>
        <dbReference type="ChEBI" id="CHEBI:37565"/>
    </ligand>
</feature>
<feature type="binding site" evidence="2">
    <location>
        <position position="61"/>
    </location>
    <ligand>
        <name>GTP</name>
        <dbReference type="ChEBI" id="CHEBI:37565"/>
    </ligand>
</feature>
<feature type="binding site" evidence="2">
    <location>
        <position position="62"/>
    </location>
    <ligand>
        <name>GTP</name>
        <dbReference type="ChEBI" id="CHEBI:37565"/>
    </ligand>
</feature>
<feature type="binding site" evidence="2">
    <location>
        <position position="62"/>
    </location>
    <ligand>
        <name>Mg(2+)</name>
        <dbReference type="ChEBI" id="CHEBI:18420"/>
    </ligand>
</feature>
<feature type="binding site" evidence="2">
    <location>
        <position position="85"/>
    </location>
    <ligand>
        <name>Mg(2+)</name>
        <dbReference type="ChEBI" id="CHEBI:18420"/>
    </ligand>
</feature>
<feature type="binding site" evidence="2">
    <location>
        <position position="88"/>
    </location>
    <ligand>
        <name>GTP</name>
        <dbReference type="ChEBI" id="CHEBI:37565"/>
    </ligand>
</feature>
<feature type="binding site" evidence="2">
    <location>
        <position position="143"/>
    </location>
    <ligand>
        <name>GTP</name>
        <dbReference type="ChEBI" id="CHEBI:37565"/>
    </ligand>
</feature>
<feature type="binding site" evidence="2">
    <location>
        <position position="144"/>
    </location>
    <ligand>
        <name>GTP</name>
        <dbReference type="ChEBI" id="CHEBI:37565"/>
    </ligand>
</feature>
<feature type="binding site" evidence="2">
    <location>
        <position position="146"/>
    </location>
    <ligand>
        <name>GTP</name>
        <dbReference type="ChEBI" id="CHEBI:37565"/>
    </ligand>
</feature>
<feature type="binding site" evidence="2">
    <location>
        <position position="174"/>
    </location>
    <ligand>
        <name>GTP</name>
        <dbReference type="ChEBI" id="CHEBI:37565"/>
    </ligand>
</feature>
<feature type="binding site" evidence="2">
    <location>
        <position position="175"/>
    </location>
    <ligand>
        <name>GTP</name>
        <dbReference type="ChEBI" id="CHEBI:37565"/>
    </ligand>
</feature>
<feature type="modified residue" description="Phosphothreonine; by LRRK2" evidence="10">
    <location>
        <position position="86"/>
    </location>
</feature>
<feature type="modified residue" description="Phosphoserine" evidence="5">
    <location>
        <position position="196"/>
    </location>
</feature>
<feature type="modified residue" description="Phosphoserine" evidence="4">
    <location>
        <position position="198"/>
    </location>
</feature>
<feature type="modified residue" description="Phosphothreonine" evidence="13">
    <location>
        <position position="206"/>
    </location>
</feature>
<feature type="modified residue" description="Cysteine methyl ester" evidence="1">
    <location>
        <position position="227"/>
    </location>
</feature>
<feature type="lipid moiety-binding region" description="S-geranylgeranyl cysteine" evidence="1">
    <location>
        <position position="225"/>
    </location>
</feature>
<feature type="lipid moiety-binding region" description="S-geranylgeranyl cysteine" evidence="1">
    <location>
        <position position="227"/>
    </location>
</feature>